<protein>
    <recommendedName>
        <fullName>Putative uncharacterized protein YDR467C</fullName>
    </recommendedName>
</protein>
<keyword id="KW-0472">Membrane</keyword>
<keyword id="KW-0812">Transmembrane</keyword>
<keyword id="KW-1133">Transmembrane helix</keyword>
<sequence>MIYMLVFLDRQQLVHIFLFRSRGTTNIIKACYFFFLLFCKLLNAAEAPLLAISLSKFVWLLLRVCKTSYLLLLITMLEGAEYFSLVVGNSICGSGGEGVGCRYPVVLI</sequence>
<dbReference type="EMBL" id="U33050">
    <property type="protein sequence ID" value="AAB64936.1"/>
    <property type="molecule type" value="Genomic_DNA"/>
</dbReference>
<dbReference type="PIR" id="S69662">
    <property type="entry name" value="S69662"/>
</dbReference>
<dbReference type="PaxDb" id="4932-YDR467C"/>
<dbReference type="TopDownProteomics" id="P87264"/>
<dbReference type="EnsemblFungi" id="YDR467C_mRNA">
    <property type="protein sequence ID" value="YDR467C"/>
    <property type="gene ID" value="YDR467C"/>
</dbReference>
<dbReference type="AGR" id="SGD:S000002875"/>
<dbReference type="SGD" id="S000002875">
    <property type="gene designation" value="YDR467C"/>
</dbReference>
<dbReference type="HOGENOM" id="CLU_2199045_0_0_1"/>
<dbReference type="GO" id="GO:0016020">
    <property type="term" value="C:membrane"/>
    <property type="evidence" value="ECO:0007669"/>
    <property type="project" value="UniProtKB-SubCell"/>
</dbReference>
<feature type="chain" id="PRO_0000299898" description="Putative uncharacterized protein YDR467C">
    <location>
        <begin position="1"/>
        <end position="108"/>
    </location>
</feature>
<feature type="transmembrane region" description="Helical" evidence="1">
    <location>
        <begin position="32"/>
        <end position="52"/>
    </location>
</feature>
<feature type="transmembrane region" description="Helical" evidence="1">
    <location>
        <begin position="68"/>
        <end position="88"/>
    </location>
</feature>
<accession>P87264</accession>
<organism>
    <name type="scientific">Saccharomyces cerevisiae (strain ATCC 204508 / S288c)</name>
    <name type="common">Baker's yeast</name>
    <dbReference type="NCBI Taxonomy" id="559292"/>
    <lineage>
        <taxon>Eukaryota</taxon>
        <taxon>Fungi</taxon>
        <taxon>Dikarya</taxon>
        <taxon>Ascomycota</taxon>
        <taxon>Saccharomycotina</taxon>
        <taxon>Saccharomycetes</taxon>
        <taxon>Saccharomycetales</taxon>
        <taxon>Saccharomycetaceae</taxon>
        <taxon>Saccharomyces</taxon>
    </lineage>
</organism>
<evidence type="ECO:0000255" key="1"/>
<evidence type="ECO:0000305" key="2"/>
<evidence type="ECO:0000305" key="3">
    <source>
    </source>
</evidence>
<gene>
    <name type="ordered locus">YDR467C</name>
</gene>
<comment type="subcellular location">
    <subcellularLocation>
        <location evidence="2">Membrane</location>
        <topology evidence="2">Multi-pass membrane protein</topology>
    </subcellularLocation>
</comment>
<comment type="miscellaneous">
    <text evidence="2">Partially overlaps PKH3.</text>
</comment>
<comment type="caution">
    <text evidence="3">Product of a dubious gene prediction unlikely to encode a functional protein. Because of that it is not part of the S.cerevisiae S288c complete/reference proteome set.</text>
</comment>
<proteinExistence type="uncertain"/>
<name>YD467_YEAST</name>
<reference key="1">
    <citation type="journal article" date="1997" name="Nature">
        <title>The nucleotide sequence of Saccharomyces cerevisiae chromosome IV.</title>
        <authorList>
            <person name="Jacq C."/>
            <person name="Alt-Moerbe J."/>
            <person name="Andre B."/>
            <person name="Arnold W."/>
            <person name="Bahr A."/>
            <person name="Ballesta J.P.G."/>
            <person name="Bargues M."/>
            <person name="Baron L."/>
            <person name="Becker A."/>
            <person name="Biteau N."/>
            <person name="Bloecker H."/>
            <person name="Blugeon C."/>
            <person name="Boskovic J."/>
            <person name="Brandt P."/>
            <person name="Brueckner M."/>
            <person name="Buitrago M.J."/>
            <person name="Coster F."/>
            <person name="Delaveau T."/>
            <person name="del Rey F."/>
            <person name="Dujon B."/>
            <person name="Eide L.G."/>
            <person name="Garcia-Cantalejo J.M."/>
            <person name="Goffeau A."/>
            <person name="Gomez-Peris A."/>
            <person name="Granotier C."/>
            <person name="Hanemann V."/>
            <person name="Hankeln T."/>
            <person name="Hoheisel J.D."/>
            <person name="Jaeger W."/>
            <person name="Jimenez A."/>
            <person name="Jonniaux J.-L."/>
            <person name="Kraemer C."/>
            <person name="Kuester H."/>
            <person name="Laamanen P."/>
            <person name="Legros Y."/>
            <person name="Louis E.J."/>
            <person name="Moeller-Rieker S."/>
            <person name="Monnet A."/>
            <person name="Moro M."/>
            <person name="Mueller-Auer S."/>
            <person name="Nussbaumer B."/>
            <person name="Paricio N."/>
            <person name="Paulin L."/>
            <person name="Perea J."/>
            <person name="Perez-Alonso M."/>
            <person name="Perez-Ortin J.E."/>
            <person name="Pohl T.M."/>
            <person name="Prydz H."/>
            <person name="Purnelle B."/>
            <person name="Rasmussen S.W."/>
            <person name="Remacha M.A."/>
            <person name="Revuelta J.L."/>
            <person name="Rieger M."/>
            <person name="Salom D."/>
            <person name="Saluz H.P."/>
            <person name="Saiz J.E."/>
            <person name="Saren A.-M."/>
            <person name="Schaefer M."/>
            <person name="Scharfe M."/>
            <person name="Schmidt E.R."/>
            <person name="Schneider C."/>
            <person name="Scholler P."/>
            <person name="Schwarz S."/>
            <person name="Soler-Mira A."/>
            <person name="Urrestarazu L.A."/>
            <person name="Verhasselt P."/>
            <person name="Vissers S."/>
            <person name="Voet M."/>
            <person name="Volckaert G."/>
            <person name="Wagner G."/>
            <person name="Wambutt R."/>
            <person name="Wedler E."/>
            <person name="Wedler H."/>
            <person name="Woelfl S."/>
            <person name="Harris D.E."/>
            <person name="Bowman S."/>
            <person name="Brown D."/>
            <person name="Churcher C.M."/>
            <person name="Connor R."/>
            <person name="Dedman K."/>
            <person name="Gentles S."/>
            <person name="Hamlin N."/>
            <person name="Hunt S."/>
            <person name="Jones L."/>
            <person name="McDonald S."/>
            <person name="Murphy L.D."/>
            <person name="Niblett D."/>
            <person name="Odell C."/>
            <person name="Oliver K."/>
            <person name="Rajandream M.A."/>
            <person name="Richards C."/>
            <person name="Shore L."/>
            <person name="Walsh S.V."/>
            <person name="Barrell B.G."/>
            <person name="Dietrich F.S."/>
            <person name="Mulligan J.T."/>
            <person name="Allen E."/>
            <person name="Araujo R."/>
            <person name="Aviles E."/>
            <person name="Berno A."/>
            <person name="Carpenter J."/>
            <person name="Chen E."/>
            <person name="Cherry J.M."/>
            <person name="Chung E."/>
            <person name="Duncan M."/>
            <person name="Hunicke-Smith S."/>
            <person name="Hyman R.W."/>
            <person name="Komp C."/>
            <person name="Lashkari D."/>
            <person name="Lew H."/>
            <person name="Lin D."/>
            <person name="Mosedale D."/>
            <person name="Nakahara K."/>
            <person name="Namath A."/>
            <person name="Oefner P."/>
            <person name="Oh C."/>
            <person name="Petel F.X."/>
            <person name="Roberts D."/>
            <person name="Schramm S."/>
            <person name="Schroeder M."/>
            <person name="Shogren T."/>
            <person name="Shroff N."/>
            <person name="Winant A."/>
            <person name="Yelton M.A."/>
            <person name="Botstein D."/>
            <person name="Davis R.W."/>
            <person name="Johnston M."/>
            <person name="Andrews S."/>
            <person name="Brinkman R."/>
            <person name="Cooper J."/>
            <person name="Ding H."/>
            <person name="Du Z."/>
            <person name="Favello A."/>
            <person name="Fulton L."/>
            <person name="Gattung S."/>
            <person name="Greco T."/>
            <person name="Hallsworth K."/>
            <person name="Hawkins J."/>
            <person name="Hillier L.W."/>
            <person name="Jier M."/>
            <person name="Johnson D."/>
            <person name="Johnston L."/>
            <person name="Kirsten J."/>
            <person name="Kucaba T."/>
            <person name="Langston Y."/>
            <person name="Latreille P."/>
            <person name="Le T."/>
            <person name="Mardis E."/>
            <person name="Menezes S."/>
            <person name="Miller N."/>
            <person name="Nhan M."/>
            <person name="Pauley A."/>
            <person name="Peluso D."/>
            <person name="Rifkin L."/>
            <person name="Riles L."/>
            <person name="Taich A."/>
            <person name="Trevaskis E."/>
            <person name="Vignati D."/>
            <person name="Wilcox L."/>
            <person name="Wohldman P."/>
            <person name="Vaudin M."/>
            <person name="Wilson R."/>
            <person name="Waterston R."/>
            <person name="Albermann K."/>
            <person name="Hani J."/>
            <person name="Heumann K."/>
            <person name="Kleine K."/>
            <person name="Mewes H.-W."/>
            <person name="Zollner A."/>
            <person name="Zaccaria P."/>
        </authorList>
    </citation>
    <scope>NUCLEOTIDE SEQUENCE [LARGE SCALE GENOMIC DNA]</scope>
    <source>
        <strain>ATCC 204508 / S288c</strain>
    </source>
</reference>
<reference key="2">
    <citation type="journal article" date="2014" name="G3 (Bethesda)">
        <title>The reference genome sequence of Saccharomyces cerevisiae: Then and now.</title>
        <authorList>
            <person name="Engel S.R."/>
            <person name="Dietrich F.S."/>
            <person name="Fisk D.G."/>
            <person name="Binkley G."/>
            <person name="Balakrishnan R."/>
            <person name="Costanzo M.C."/>
            <person name="Dwight S.S."/>
            <person name="Hitz B.C."/>
            <person name="Karra K."/>
            <person name="Nash R.S."/>
            <person name="Weng S."/>
            <person name="Wong E.D."/>
            <person name="Lloyd P."/>
            <person name="Skrzypek M.S."/>
            <person name="Miyasato S.R."/>
            <person name="Simison M."/>
            <person name="Cherry J.M."/>
        </authorList>
    </citation>
    <scope>GENOME REANNOTATION</scope>
    <source>
        <strain>ATCC 204508 / S288c</strain>
    </source>
</reference>